<dbReference type="EC" id="3.5.1.5" evidence="1"/>
<dbReference type="EMBL" id="CP000269">
    <property type="protein sequence ID" value="ABR89059.1"/>
    <property type="molecule type" value="Genomic_DNA"/>
</dbReference>
<dbReference type="RefSeq" id="WP_012079666.1">
    <property type="nucleotide sequence ID" value="NC_009659.1"/>
</dbReference>
<dbReference type="SMR" id="A6SZ06"/>
<dbReference type="STRING" id="375286.mma_1813"/>
<dbReference type="KEGG" id="mms:mma_1813"/>
<dbReference type="eggNOG" id="COG0832">
    <property type="taxonomic scope" value="Bacteria"/>
</dbReference>
<dbReference type="HOGENOM" id="CLU_129707_1_1_4"/>
<dbReference type="OrthoDB" id="9797217at2"/>
<dbReference type="UniPathway" id="UPA00258">
    <property type="reaction ID" value="UER00370"/>
</dbReference>
<dbReference type="Proteomes" id="UP000006388">
    <property type="component" value="Chromosome"/>
</dbReference>
<dbReference type="GO" id="GO:0035550">
    <property type="term" value="C:urease complex"/>
    <property type="evidence" value="ECO:0007669"/>
    <property type="project" value="InterPro"/>
</dbReference>
<dbReference type="GO" id="GO:0009039">
    <property type="term" value="F:urease activity"/>
    <property type="evidence" value="ECO:0007669"/>
    <property type="project" value="UniProtKB-UniRule"/>
</dbReference>
<dbReference type="GO" id="GO:0043419">
    <property type="term" value="P:urea catabolic process"/>
    <property type="evidence" value="ECO:0007669"/>
    <property type="project" value="UniProtKB-UniRule"/>
</dbReference>
<dbReference type="CDD" id="cd00407">
    <property type="entry name" value="Urease_beta"/>
    <property type="match status" value="1"/>
</dbReference>
<dbReference type="FunFam" id="2.10.150.10:FF:000001">
    <property type="entry name" value="Urease subunit beta"/>
    <property type="match status" value="1"/>
</dbReference>
<dbReference type="Gene3D" id="2.10.150.10">
    <property type="entry name" value="Urease, beta subunit"/>
    <property type="match status" value="1"/>
</dbReference>
<dbReference type="HAMAP" id="MF_01954">
    <property type="entry name" value="Urease_beta"/>
    <property type="match status" value="1"/>
</dbReference>
<dbReference type="InterPro" id="IPR002019">
    <property type="entry name" value="Urease_beta-like"/>
</dbReference>
<dbReference type="InterPro" id="IPR036461">
    <property type="entry name" value="Urease_betasu_sf"/>
</dbReference>
<dbReference type="InterPro" id="IPR050069">
    <property type="entry name" value="Urease_subunit"/>
</dbReference>
<dbReference type="NCBIfam" id="NF009682">
    <property type="entry name" value="PRK13203.1"/>
    <property type="match status" value="1"/>
</dbReference>
<dbReference type="NCBIfam" id="TIGR00192">
    <property type="entry name" value="urease_beta"/>
    <property type="match status" value="1"/>
</dbReference>
<dbReference type="PANTHER" id="PTHR33569">
    <property type="entry name" value="UREASE"/>
    <property type="match status" value="1"/>
</dbReference>
<dbReference type="PANTHER" id="PTHR33569:SF1">
    <property type="entry name" value="UREASE"/>
    <property type="match status" value="1"/>
</dbReference>
<dbReference type="Pfam" id="PF00699">
    <property type="entry name" value="Urease_beta"/>
    <property type="match status" value="1"/>
</dbReference>
<dbReference type="SUPFAM" id="SSF51278">
    <property type="entry name" value="Urease, beta-subunit"/>
    <property type="match status" value="1"/>
</dbReference>
<protein>
    <recommendedName>
        <fullName evidence="1">Urease subunit beta</fullName>
        <ecNumber evidence="1">3.5.1.5</ecNumber>
    </recommendedName>
    <alternativeName>
        <fullName evidence="1">Urea amidohydrolase subunit beta</fullName>
    </alternativeName>
</protein>
<comment type="catalytic activity">
    <reaction evidence="1">
        <text>urea + 2 H2O + H(+) = hydrogencarbonate + 2 NH4(+)</text>
        <dbReference type="Rhea" id="RHEA:20557"/>
        <dbReference type="ChEBI" id="CHEBI:15377"/>
        <dbReference type="ChEBI" id="CHEBI:15378"/>
        <dbReference type="ChEBI" id="CHEBI:16199"/>
        <dbReference type="ChEBI" id="CHEBI:17544"/>
        <dbReference type="ChEBI" id="CHEBI:28938"/>
        <dbReference type="EC" id="3.5.1.5"/>
    </reaction>
</comment>
<comment type="pathway">
    <text evidence="1">Nitrogen metabolism; urea degradation; CO(2) and NH(3) from urea (urease route): step 1/1.</text>
</comment>
<comment type="subunit">
    <text evidence="1">Heterotrimer of UreA (gamma), UreB (beta) and UreC (alpha) subunits. Three heterotrimers associate to form the active enzyme.</text>
</comment>
<comment type="subcellular location">
    <subcellularLocation>
        <location evidence="1">Cytoplasm</location>
    </subcellularLocation>
</comment>
<comment type="similarity">
    <text evidence="1">Belongs to the urease beta subunit family.</text>
</comment>
<evidence type="ECO:0000255" key="1">
    <source>
        <dbReference type="HAMAP-Rule" id="MF_01954"/>
    </source>
</evidence>
<feature type="chain" id="PRO_1000070737" description="Urease subunit beta">
    <location>
        <begin position="1"/>
        <end position="107"/>
    </location>
</feature>
<accession>A6SZ06</accession>
<gene>
    <name evidence="1" type="primary">ureB</name>
    <name type="ordered locus">mma_1813</name>
</gene>
<proteinExistence type="inferred from homology"/>
<name>URE2_JANMA</name>
<organism>
    <name type="scientific">Janthinobacterium sp. (strain Marseille)</name>
    <name type="common">Minibacterium massiliensis</name>
    <dbReference type="NCBI Taxonomy" id="375286"/>
    <lineage>
        <taxon>Bacteria</taxon>
        <taxon>Pseudomonadati</taxon>
        <taxon>Pseudomonadota</taxon>
        <taxon>Betaproteobacteria</taxon>
        <taxon>Burkholderiales</taxon>
        <taxon>Oxalobacteraceae</taxon>
        <taxon>Janthinobacterium</taxon>
    </lineage>
</organism>
<keyword id="KW-0963">Cytoplasm</keyword>
<keyword id="KW-0378">Hydrolase</keyword>
<reference key="1">
    <citation type="journal article" date="2007" name="PLoS Genet.">
        <title>Genome analysis of Minibacterium massiliensis highlights the convergent evolution of water-living bacteria.</title>
        <authorList>
            <person name="Audic S."/>
            <person name="Robert C."/>
            <person name="Campagna B."/>
            <person name="Parinello H."/>
            <person name="Claverie J.-M."/>
            <person name="Raoult D."/>
            <person name="Drancourt M."/>
        </authorList>
    </citation>
    <scope>NUCLEOTIDE SEQUENCE [LARGE SCALE GENOMIC DNA]</scope>
    <source>
        <strain>Marseille</strain>
    </source>
</reference>
<sequence>MIPGEMLVEPGDIELNVGRATATVKVANSGDRPIQVGSHFHFYETNPALKFDRAIGYGMRLNITAGTAVRFEPGQERTVELVALAGDRKVYGFNGKVMGALDKKEGK</sequence>